<keyword id="KW-0963">Cytoplasm</keyword>
<keyword id="KW-0479">Metal-binding</keyword>
<keyword id="KW-0521">NADP</keyword>
<keyword id="KW-0560">Oxidoreductase</keyword>
<organism>
    <name type="scientific">Vitis vinifera</name>
    <name type="common">Grape</name>
    <dbReference type="NCBI Taxonomy" id="29760"/>
    <lineage>
        <taxon>Eukaryota</taxon>
        <taxon>Viridiplantae</taxon>
        <taxon>Streptophyta</taxon>
        <taxon>Embryophyta</taxon>
        <taxon>Tracheophyta</taxon>
        <taxon>Spermatophyta</taxon>
        <taxon>Magnoliopsida</taxon>
        <taxon>eudicotyledons</taxon>
        <taxon>Gunneridae</taxon>
        <taxon>Pentapetalae</taxon>
        <taxon>rosids</taxon>
        <taxon>Vitales</taxon>
        <taxon>Vitaceae</taxon>
        <taxon>Viteae</taxon>
        <taxon>Vitis</taxon>
    </lineage>
</organism>
<reference key="1">
    <citation type="journal article" date="1995" name="Plant Physiol.">
        <title>Cloning of a full-length cDNA for malic enzyme (EC 1.1.1.40) from grape berries.</title>
        <authorList>
            <person name="Franke K.E."/>
            <person name="Adams D.O."/>
        </authorList>
    </citation>
    <scope>NUCLEOTIDE SEQUENCE [MRNA]</scope>
    <source>
        <strain>cv. Thompson</strain>
        <tissue>Fruit</tissue>
    </source>
</reference>
<dbReference type="EC" id="1.1.1.40"/>
<dbReference type="EMBL" id="L34836">
    <property type="protein sequence ID" value="AAA67087.1"/>
    <property type="molecule type" value="mRNA"/>
</dbReference>
<dbReference type="RefSeq" id="NP_001268142.1">
    <property type="nucleotide sequence ID" value="NM_001281213.1"/>
</dbReference>
<dbReference type="SMR" id="P51615"/>
<dbReference type="PaxDb" id="29760-VIT_11s0016g03210.t01"/>
<dbReference type="GeneID" id="100233140"/>
<dbReference type="KEGG" id="vvi:100233140"/>
<dbReference type="eggNOG" id="KOG1257">
    <property type="taxonomic scope" value="Eukaryota"/>
</dbReference>
<dbReference type="OrthoDB" id="937830at71240"/>
<dbReference type="ExpressionAtlas" id="P51615">
    <property type="expression patterns" value="baseline and differential"/>
</dbReference>
<dbReference type="GO" id="GO:0005737">
    <property type="term" value="C:cytoplasm"/>
    <property type="evidence" value="ECO:0007669"/>
    <property type="project" value="UniProtKB-SubCell"/>
</dbReference>
<dbReference type="GO" id="GO:0004473">
    <property type="term" value="F:malate dehydrogenase (decarboxylating) (NADP+) activity"/>
    <property type="evidence" value="ECO:0007669"/>
    <property type="project" value="UniProtKB-EC"/>
</dbReference>
<dbReference type="GO" id="GO:0046872">
    <property type="term" value="F:metal ion binding"/>
    <property type="evidence" value="ECO:0007669"/>
    <property type="project" value="UniProtKB-KW"/>
</dbReference>
<dbReference type="GO" id="GO:0051287">
    <property type="term" value="F:NAD binding"/>
    <property type="evidence" value="ECO:0007669"/>
    <property type="project" value="InterPro"/>
</dbReference>
<dbReference type="GO" id="GO:0008948">
    <property type="term" value="F:oxaloacetate decarboxylase activity"/>
    <property type="evidence" value="ECO:0007669"/>
    <property type="project" value="RHEA"/>
</dbReference>
<dbReference type="GO" id="GO:0006108">
    <property type="term" value="P:malate metabolic process"/>
    <property type="evidence" value="ECO:0007669"/>
    <property type="project" value="UniProtKB-ARBA"/>
</dbReference>
<dbReference type="CDD" id="cd05312">
    <property type="entry name" value="NAD_bind_1_malic_enz"/>
    <property type="match status" value="1"/>
</dbReference>
<dbReference type="FunFam" id="3.40.50.10380:FF:000002">
    <property type="entry name" value="Malic enzyme"/>
    <property type="match status" value="1"/>
</dbReference>
<dbReference type="FunFam" id="3.40.50.720:FF:000067">
    <property type="entry name" value="Malic enzyme"/>
    <property type="match status" value="1"/>
</dbReference>
<dbReference type="Gene3D" id="3.40.50.10380">
    <property type="entry name" value="Malic enzyme, N-terminal domain"/>
    <property type="match status" value="1"/>
</dbReference>
<dbReference type="Gene3D" id="3.40.50.720">
    <property type="entry name" value="NAD(P)-binding Rossmann-like Domain"/>
    <property type="match status" value="1"/>
</dbReference>
<dbReference type="InterPro" id="IPR046346">
    <property type="entry name" value="Aminoacid_DH-like_N_sf"/>
</dbReference>
<dbReference type="InterPro" id="IPR015884">
    <property type="entry name" value="Malic_enzyme_CS"/>
</dbReference>
<dbReference type="InterPro" id="IPR012301">
    <property type="entry name" value="Malic_N_dom"/>
</dbReference>
<dbReference type="InterPro" id="IPR037062">
    <property type="entry name" value="Malic_N_dom_sf"/>
</dbReference>
<dbReference type="InterPro" id="IPR012302">
    <property type="entry name" value="Malic_NAD-bd"/>
</dbReference>
<dbReference type="InterPro" id="IPR001891">
    <property type="entry name" value="Malic_OxRdtase"/>
</dbReference>
<dbReference type="InterPro" id="IPR036291">
    <property type="entry name" value="NAD(P)-bd_dom_sf"/>
</dbReference>
<dbReference type="NCBIfam" id="NF010052">
    <property type="entry name" value="PRK13529.1"/>
    <property type="match status" value="1"/>
</dbReference>
<dbReference type="PANTHER" id="PTHR23406">
    <property type="entry name" value="MALIC ENZYME-RELATED"/>
    <property type="match status" value="1"/>
</dbReference>
<dbReference type="PANTHER" id="PTHR23406:SF89">
    <property type="entry name" value="NADP-DEPENDENT MALIC ENZYME 1"/>
    <property type="match status" value="1"/>
</dbReference>
<dbReference type="Pfam" id="PF00390">
    <property type="entry name" value="malic"/>
    <property type="match status" value="1"/>
</dbReference>
<dbReference type="Pfam" id="PF03949">
    <property type="entry name" value="Malic_M"/>
    <property type="match status" value="1"/>
</dbReference>
<dbReference type="PIRSF" id="PIRSF000106">
    <property type="entry name" value="ME"/>
    <property type="match status" value="1"/>
</dbReference>
<dbReference type="PRINTS" id="PR00072">
    <property type="entry name" value="MALOXRDTASE"/>
</dbReference>
<dbReference type="SMART" id="SM01274">
    <property type="entry name" value="malic"/>
    <property type="match status" value="1"/>
</dbReference>
<dbReference type="SMART" id="SM00919">
    <property type="entry name" value="Malic_M"/>
    <property type="match status" value="1"/>
</dbReference>
<dbReference type="SUPFAM" id="SSF53223">
    <property type="entry name" value="Aminoacid dehydrogenase-like, N-terminal domain"/>
    <property type="match status" value="1"/>
</dbReference>
<dbReference type="SUPFAM" id="SSF51735">
    <property type="entry name" value="NAD(P)-binding Rossmann-fold domains"/>
    <property type="match status" value="1"/>
</dbReference>
<dbReference type="PROSITE" id="PS00331">
    <property type="entry name" value="MALIC_ENZYMES"/>
    <property type="match status" value="1"/>
</dbReference>
<name>MAOX_VITVI</name>
<accession>P51615</accession>
<sequence>MESTLKDIRDGASVLDLDPKATVGGGVEDLYGEDFATEDQLVTPWTVSVASGYSLLRDPRHNKGLAFNDKERDAHYLCGLLPPVVSTQELQERKLMNSIRQYQVPLQKYMAMMDLQERNERLFYKLLIDNVEELLPVVYTPTVGEACQKYGSIFRRPQGLYISLKEKGKILEVLKNWPERRIQVIVVTDGERILGLGDLGCQGMGIPVGKLSLYTALGGVRPSACLPITIDVGTNNEKLLANEFYIGLKQRRATGKEYSEFLQEFMSPVKQNYGEKVLIQFEDFANHNAFDLLAKYGTTHLAFNDDIQGTASVVLAGIVSALRLLGGTLADHKFLFLGAGEAGTGIAELIALEMSKQTKCPIEETRKKIWLVDSKGLIVGSRKDSLQQFKKPWAHEHEPVKDLLDAVKVIKPTVLIGSSGVGKAFTKEVIEAMASCNEKPLILALSNPTSQSECTAEEAYTWTQGRAIFASGSPFDPVEYNGKTFVPGQANNAYIFPGLGMGLVISGAIRVHDEMLLAASEALARQVTQENFDKGLIYPPFSNIRKISAHIAANVAAKAYELGLATRLPQPENLVKYAESCMYSPVYRSYR</sequence>
<comment type="catalytic activity">
    <reaction>
        <text>(S)-malate + NADP(+) = pyruvate + CO2 + NADPH</text>
        <dbReference type="Rhea" id="RHEA:18253"/>
        <dbReference type="ChEBI" id="CHEBI:15361"/>
        <dbReference type="ChEBI" id="CHEBI:15589"/>
        <dbReference type="ChEBI" id="CHEBI:16526"/>
        <dbReference type="ChEBI" id="CHEBI:57783"/>
        <dbReference type="ChEBI" id="CHEBI:58349"/>
        <dbReference type="EC" id="1.1.1.40"/>
    </reaction>
</comment>
<comment type="catalytic activity">
    <reaction>
        <text>oxaloacetate + H(+) = pyruvate + CO2</text>
        <dbReference type="Rhea" id="RHEA:15641"/>
        <dbReference type="ChEBI" id="CHEBI:15361"/>
        <dbReference type="ChEBI" id="CHEBI:15378"/>
        <dbReference type="ChEBI" id="CHEBI:16452"/>
        <dbReference type="ChEBI" id="CHEBI:16526"/>
        <dbReference type="EC" id="1.1.1.40"/>
    </reaction>
</comment>
<comment type="cofactor">
    <cofactor evidence="1">
        <name>Mg(2+)</name>
        <dbReference type="ChEBI" id="CHEBI:18420"/>
    </cofactor>
    <cofactor evidence="1">
        <name>Mn(2+)</name>
        <dbReference type="ChEBI" id="CHEBI:29035"/>
    </cofactor>
    <text evidence="1">Divalent metal cations. Prefers magnesium or manganese.</text>
</comment>
<comment type="subunit">
    <text evidence="1">Homotetramer.</text>
</comment>
<comment type="subcellular location">
    <subcellularLocation>
        <location evidence="2">Cytoplasm</location>
    </subcellularLocation>
</comment>
<comment type="similarity">
    <text evidence="2">Belongs to the malic enzymes family.</text>
</comment>
<feature type="chain" id="PRO_0000160204" description="NADP-dependent malic enzyme">
    <location>
        <begin position="1"/>
        <end position="591"/>
    </location>
</feature>
<feature type="active site" description="Proton donor" evidence="1">
    <location>
        <position position="139"/>
    </location>
</feature>
<feature type="active site" description="Proton acceptor" evidence="1">
    <location>
        <position position="210"/>
    </location>
</feature>
<feature type="binding site" evidence="1">
    <location>
        <position position="192"/>
    </location>
    <ligand>
        <name>NAD(+)</name>
        <dbReference type="ChEBI" id="CHEBI:57540"/>
    </ligand>
</feature>
<feature type="binding site" evidence="1">
    <location>
        <position position="282"/>
    </location>
    <ligand>
        <name>a divalent metal cation</name>
        <dbReference type="ChEBI" id="CHEBI:60240"/>
    </ligand>
</feature>
<feature type="binding site" evidence="1">
    <location>
        <position position="283"/>
    </location>
    <ligand>
        <name>a divalent metal cation</name>
        <dbReference type="ChEBI" id="CHEBI:60240"/>
    </ligand>
</feature>
<feature type="binding site" evidence="1">
    <location>
        <position position="306"/>
    </location>
    <ligand>
        <name>a divalent metal cation</name>
        <dbReference type="ChEBI" id="CHEBI:60240"/>
    </ligand>
</feature>
<feature type="binding site" evidence="1">
    <location>
        <position position="306"/>
    </location>
    <ligand>
        <name>NAD(+)</name>
        <dbReference type="ChEBI" id="CHEBI:57540"/>
    </ligand>
</feature>
<feature type="binding site" evidence="1">
    <location>
        <begin position="335"/>
        <end position="351"/>
    </location>
    <ligand>
        <name>NADP(+)</name>
        <dbReference type="ChEBI" id="CHEBI:58349"/>
    </ligand>
</feature>
<feature type="binding site" evidence="1">
    <location>
        <position position="447"/>
    </location>
    <ligand>
        <name>NAD(+)</name>
        <dbReference type="ChEBI" id="CHEBI:57540"/>
    </ligand>
</feature>
<feature type="site" description="Important for activity" evidence="1">
    <location>
        <position position="306"/>
    </location>
</feature>
<protein>
    <recommendedName>
        <fullName>NADP-dependent malic enzyme</fullName>
        <shortName>NADP-ME</shortName>
        <ecNumber>1.1.1.40</ecNumber>
    </recommendedName>
</protein>
<evidence type="ECO:0000250" key="1"/>
<evidence type="ECO:0000305" key="2"/>
<proteinExistence type="evidence at transcript level"/>